<dbReference type="EMBL" id="CP000082">
    <property type="protein sequence ID" value="AAZ18769.1"/>
    <property type="molecule type" value="Genomic_DNA"/>
</dbReference>
<dbReference type="RefSeq" id="WP_011280193.1">
    <property type="nucleotide sequence ID" value="NC_007204.1"/>
</dbReference>
<dbReference type="SMR" id="Q4FT89"/>
<dbReference type="STRING" id="259536.Psyc_0916"/>
<dbReference type="KEGG" id="par:Psyc_0916"/>
<dbReference type="eggNOG" id="COG1742">
    <property type="taxonomic scope" value="Bacteria"/>
</dbReference>
<dbReference type="HOGENOM" id="CLU_117653_2_0_6"/>
<dbReference type="OrthoDB" id="123240at2"/>
<dbReference type="Proteomes" id="UP000000546">
    <property type="component" value="Chromosome"/>
</dbReference>
<dbReference type="GO" id="GO:0005886">
    <property type="term" value="C:plasma membrane"/>
    <property type="evidence" value="ECO:0007669"/>
    <property type="project" value="UniProtKB-SubCell"/>
</dbReference>
<dbReference type="HAMAP" id="MF_00010">
    <property type="entry name" value="UPF0060"/>
    <property type="match status" value="1"/>
</dbReference>
<dbReference type="InterPro" id="IPR003844">
    <property type="entry name" value="UPF0060"/>
</dbReference>
<dbReference type="NCBIfam" id="NF002586">
    <property type="entry name" value="PRK02237.1"/>
    <property type="match status" value="1"/>
</dbReference>
<dbReference type="PANTHER" id="PTHR36116">
    <property type="entry name" value="UPF0060 MEMBRANE PROTEIN YNFA"/>
    <property type="match status" value="1"/>
</dbReference>
<dbReference type="PANTHER" id="PTHR36116:SF1">
    <property type="entry name" value="UPF0060 MEMBRANE PROTEIN YNFA"/>
    <property type="match status" value="1"/>
</dbReference>
<dbReference type="Pfam" id="PF02694">
    <property type="entry name" value="UPF0060"/>
    <property type="match status" value="1"/>
</dbReference>
<dbReference type="SUPFAM" id="SSF103481">
    <property type="entry name" value="Multidrug resistance efflux transporter EmrE"/>
    <property type="match status" value="1"/>
</dbReference>
<feature type="chain" id="PRO_0000282250" description="UPF0060 membrane protein Psyc_0916">
    <location>
        <begin position="1"/>
        <end position="110"/>
    </location>
</feature>
<feature type="transmembrane region" description="Helical" evidence="1">
    <location>
        <begin position="7"/>
        <end position="27"/>
    </location>
</feature>
<feature type="transmembrane region" description="Helical" evidence="1">
    <location>
        <begin position="33"/>
        <end position="53"/>
    </location>
</feature>
<feature type="transmembrane region" description="Helical" evidence="1">
    <location>
        <begin position="63"/>
        <end position="83"/>
    </location>
</feature>
<feature type="transmembrane region" description="Helical" evidence="1">
    <location>
        <begin position="87"/>
        <end position="107"/>
    </location>
</feature>
<accession>Q4FT89</accession>
<protein>
    <recommendedName>
        <fullName evidence="1">UPF0060 membrane protein Psyc_0916</fullName>
    </recommendedName>
</protein>
<gene>
    <name type="ordered locus">Psyc_0916</name>
</gene>
<proteinExistence type="inferred from homology"/>
<name>Y916_PSYA2</name>
<comment type="subcellular location">
    <subcellularLocation>
        <location evidence="1">Cell inner membrane</location>
        <topology evidence="1">Multi-pass membrane protein</topology>
    </subcellularLocation>
</comment>
<comment type="similarity">
    <text evidence="1">Belongs to the UPF0060 family.</text>
</comment>
<sequence>MSELKTVGLFAITALAEIAGCYLPYLWLREGKSIWLLIPGALSLVAFVWLLSLHPTAAGRTYAAYGGVYISMAILWLWTVNGIRPTTWDIVGSVVALIGMAIIMFAPRSV</sequence>
<evidence type="ECO:0000255" key="1">
    <source>
        <dbReference type="HAMAP-Rule" id="MF_00010"/>
    </source>
</evidence>
<reference key="1">
    <citation type="journal article" date="2010" name="Appl. Environ. Microbiol.">
        <title>The genome sequence of Psychrobacter arcticus 273-4, a psychroactive Siberian permafrost bacterium, reveals mechanisms for adaptation to low-temperature growth.</title>
        <authorList>
            <person name="Ayala-del-Rio H.L."/>
            <person name="Chain P.S."/>
            <person name="Grzymski J.J."/>
            <person name="Ponder M.A."/>
            <person name="Ivanova N."/>
            <person name="Bergholz P.W."/>
            <person name="Di Bartolo G."/>
            <person name="Hauser L."/>
            <person name="Land M."/>
            <person name="Bakermans C."/>
            <person name="Rodrigues D."/>
            <person name="Klappenbach J."/>
            <person name="Zarka D."/>
            <person name="Larimer F."/>
            <person name="Richardson P."/>
            <person name="Murray A."/>
            <person name="Thomashow M."/>
            <person name="Tiedje J.M."/>
        </authorList>
    </citation>
    <scope>NUCLEOTIDE SEQUENCE [LARGE SCALE GENOMIC DNA]</scope>
    <source>
        <strain>DSM 17307 / VKM B-2377 / 273-4</strain>
    </source>
</reference>
<keyword id="KW-0997">Cell inner membrane</keyword>
<keyword id="KW-1003">Cell membrane</keyword>
<keyword id="KW-0472">Membrane</keyword>
<keyword id="KW-1185">Reference proteome</keyword>
<keyword id="KW-0812">Transmembrane</keyword>
<keyword id="KW-1133">Transmembrane helix</keyword>
<organism>
    <name type="scientific">Psychrobacter arcticus (strain DSM 17307 / VKM B-2377 / 273-4)</name>
    <dbReference type="NCBI Taxonomy" id="259536"/>
    <lineage>
        <taxon>Bacteria</taxon>
        <taxon>Pseudomonadati</taxon>
        <taxon>Pseudomonadota</taxon>
        <taxon>Gammaproteobacteria</taxon>
        <taxon>Moraxellales</taxon>
        <taxon>Moraxellaceae</taxon>
        <taxon>Psychrobacter</taxon>
    </lineage>
</organism>